<evidence type="ECO:0000255" key="1">
    <source>
        <dbReference type="PROSITE-ProRule" id="PRU00981"/>
    </source>
</evidence>
<evidence type="ECO:0000256" key="2">
    <source>
        <dbReference type="SAM" id="MobiDB-lite"/>
    </source>
</evidence>
<evidence type="ECO:0000269" key="3">
    <source>
    </source>
</evidence>
<evidence type="ECO:0000269" key="4">
    <source>
    </source>
</evidence>
<evidence type="ECO:0000269" key="5">
    <source>
    </source>
</evidence>
<evidence type="ECO:0000303" key="6">
    <source>
    </source>
</evidence>
<evidence type="ECO:0000305" key="7"/>
<evidence type="ECO:0000312" key="8">
    <source>
        <dbReference type="MGI" id="MGI:104654"/>
    </source>
</evidence>
<accession>P48985</accession>
<dbReference type="EMBL" id="D43694">
    <property type="protein sequence ID" value="BAA07791.1"/>
    <property type="molecule type" value="Genomic_DNA"/>
</dbReference>
<dbReference type="EMBL" id="BC010820">
    <property type="protein sequence ID" value="AAH10820.1"/>
    <property type="molecule type" value="mRNA"/>
</dbReference>
<dbReference type="EMBL" id="BC051256">
    <property type="protein sequence ID" value="AAH51256.1"/>
    <property type="molecule type" value="mRNA"/>
</dbReference>
<dbReference type="CCDS" id="CCDS20203.1"/>
<dbReference type="PIR" id="A56387">
    <property type="entry name" value="A56387"/>
</dbReference>
<dbReference type="RefSeq" id="NP_031526.1">
    <property type="nucleotide sequence ID" value="NM_007500.5"/>
</dbReference>
<dbReference type="SMR" id="P48985"/>
<dbReference type="BioGRID" id="198237">
    <property type="interactions" value="1"/>
</dbReference>
<dbReference type="DIP" id="DIP-46434N"/>
<dbReference type="FunCoup" id="P48985">
    <property type="interactions" value="1307"/>
</dbReference>
<dbReference type="IntAct" id="P48985">
    <property type="interactions" value="3"/>
</dbReference>
<dbReference type="STRING" id="10090.ENSMUSP00000098903"/>
<dbReference type="GlyGen" id="P48985">
    <property type="glycosylation" value="2 sites"/>
</dbReference>
<dbReference type="iPTMnet" id="P48985"/>
<dbReference type="PhosphoSitePlus" id="P48985"/>
<dbReference type="PaxDb" id="10090-ENSMUSP00000098903"/>
<dbReference type="ProteomicsDB" id="265154"/>
<dbReference type="Antibodypedia" id="25709">
    <property type="antibodies" value="569 antibodies from 33 providers"/>
</dbReference>
<dbReference type="DNASU" id="11921"/>
<dbReference type="Ensembl" id="ENSMUST00000101351.6">
    <property type="protein sequence ID" value="ENSMUSP00000098903.5"/>
    <property type="gene ID" value="ENSMUSG00000073043.6"/>
</dbReference>
<dbReference type="GeneID" id="11921"/>
<dbReference type="KEGG" id="mmu:11921"/>
<dbReference type="UCSC" id="uc009ceb.2">
    <property type="organism name" value="mouse"/>
</dbReference>
<dbReference type="AGR" id="MGI:104654"/>
<dbReference type="CTD" id="474"/>
<dbReference type="MGI" id="MGI:104654">
    <property type="gene designation" value="Atoh1"/>
</dbReference>
<dbReference type="VEuPathDB" id="HostDB:ENSMUSG00000073043"/>
<dbReference type="eggNOG" id="KOG4395">
    <property type="taxonomic scope" value="Eukaryota"/>
</dbReference>
<dbReference type="GeneTree" id="ENSGT00940000160064"/>
<dbReference type="HOGENOM" id="CLU_083039_0_0_1"/>
<dbReference type="InParanoid" id="P48985"/>
<dbReference type="OMA" id="CKNDHHH"/>
<dbReference type="OrthoDB" id="6161578at2759"/>
<dbReference type="PhylomeDB" id="P48985"/>
<dbReference type="TreeFam" id="TF315153"/>
<dbReference type="BioGRID-ORCS" id="11921">
    <property type="hits" value="0 hits in 78 CRISPR screens"/>
</dbReference>
<dbReference type="PRO" id="PR:P48985"/>
<dbReference type="Proteomes" id="UP000000589">
    <property type="component" value="Chromosome 6"/>
</dbReference>
<dbReference type="RNAct" id="P48985">
    <property type="molecule type" value="protein"/>
</dbReference>
<dbReference type="Bgee" id="ENSMUSG00000073043">
    <property type="expression patterns" value="Expressed in cerebellum external granule cell layer and 77 other cell types or tissues"/>
</dbReference>
<dbReference type="GO" id="GO:0005634">
    <property type="term" value="C:nucleus"/>
    <property type="evidence" value="ECO:0000314"/>
    <property type="project" value="UniProtKB"/>
</dbReference>
<dbReference type="GO" id="GO:0031490">
    <property type="term" value="F:chromatin DNA binding"/>
    <property type="evidence" value="ECO:0000314"/>
    <property type="project" value="MGI"/>
</dbReference>
<dbReference type="GO" id="GO:0003677">
    <property type="term" value="F:DNA binding"/>
    <property type="evidence" value="ECO:0000314"/>
    <property type="project" value="MGI"/>
</dbReference>
<dbReference type="GO" id="GO:0001228">
    <property type="term" value="F:DNA-binding transcription activator activity, RNA polymerase II-specific"/>
    <property type="evidence" value="ECO:0000314"/>
    <property type="project" value="NTNU_SB"/>
</dbReference>
<dbReference type="GO" id="GO:0046983">
    <property type="term" value="F:protein dimerization activity"/>
    <property type="evidence" value="ECO:0007669"/>
    <property type="project" value="InterPro"/>
</dbReference>
<dbReference type="GO" id="GO:0000978">
    <property type="term" value="F:RNA polymerase II cis-regulatory region sequence-specific DNA binding"/>
    <property type="evidence" value="ECO:0000314"/>
    <property type="project" value="NTNU_SB"/>
</dbReference>
<dbReference type="GO" id="GO:0043565">
    <property type="term" value="F:sequence-specific DNA binding"/>
    <property type="evidence" value="ECO:0000314"/>
    <property type="project" value="MGI"/>
</dbReference>
<dbReference type="GO" id="GO:0042668">
    <property type="term" value="P:auditory receptor cell fate determination"/>
    <property type="evidence" value="ECO:0000314"/>
    <property type="project" value="MGI"/>
</dbReference>
<dbReference type="GO" id="GO:0042667">
    <property type="term" value="P:auditory receptor cell fate specification"/>
    <property type="evidence" value="ECO:0000315"/>
    <property type="project" value="MGI"/>
</dbReference>
<dbReference type="GO" id="GO:0007411">
    <property type="term" value="P:axon guidance"/>
    <property type="evidence" value="ECO:0000315"/>
    <property type="project" value="MGI"/>
</dbReference>
<dbReference type="GO" id="GO:0007420">
    <property type="term" value="P:brain development"/>
    <property type="evidence" value="ECO:0000315"/>
    <property type="project" value="MGI"/>
</dbReference>
<dbReference type="GO" id="GO:0030154">
    <property type="term" value="P:cell differentiation"/>
    <property type="evidence" value="ECO:0000315"/>
    <property type="project" value="MGI"/>
</dbReference>
<dbReference type="GO" id="GO:0021953">
    <property type="term" value="P:central nervous system neuron differentiation"/>
    <property type="evidence" value="ECO:0000315"/>
    <property type="project" value="MGI"/>
</dbReference>
<dbReference type="GO" id="GO:0021987">
    <property type="term" value="P:cerebral cortex development"/>
    <property type="evidence" value="ECO:0000315"/>
    <property type="project" value="MGI"/>
</dbReference>
<dbReference type="GO" id="GO:1904019">
    <property type="term" value="P:epithelial cell apoptotic process"/>
    <property type="evidence" value="ECO:0000315"/>
    <property type="project" value="MGI"/>
</dbReference>
<dbReference type="GO" id="GO:0042491">
    <property type="term" value="P:inner ear auditory receptor cell differentiation"/>
    <property type="evidence" value="ECO:0000314"/>
    <property type="project" value="MGI"/>
</dbReference>
<dbReference type="GO" id="GO:0048839">
    <property type="term" value="P:inner ear development"/>
    <property type="evidence" value="ECO:0000315"/>
    <property type="project" value="MGI"/>
</dbReference>
<dbReference type="GO" id="GO:0042472">
    <property type="term" value="P:inner ear morphogenesis"/>
    <property type="evidence" value="ECO:0000315"/>
    <property type="project" value="MGI"/>
</dbReference>
<dbReference type="GO" id="GO:1904036">
    <property type="term" value="P:negative regulation of epithelial cell apoptotic process"/>
    <property type="evidence" value="ECO:0000315"/>
    <property type="project" value="MGI"/>
</dbReference>
<dbReference type="GO" id="GO:0014014">
    <property type="term" value="P:negative regulation of gliogenesis"/>
    <property type="evidence" value="ECO:0000316"/>
    <property type="project" value="UniProtKB"/>
</dbReference>
<dbReference type="GO" id="GO:0097402">
    <property type="term" value="P:neuroblast migration"/>
    <property type="evidence" value="ECO:0000315"/>
    <property type="project" value="MGI"/>
</dbReference>
<dbReference type="GO" id="GO:0001764">
    <property type="term" value="P:neuron migration"/>
    <property type="evidence" value="ECO:0000315"/>
    <property type="project" value="MGI"/>
</dbReference>
<dbReference type="GO" id="GO:0007219">
    <property type="term" value="P:Notch signaling pathway"/>
    <property type="evidence" value="ECO:0000314"/>
    <property type="project" value="MGI"/>
</dbReference>
<dbReference type="GO" id="GO:0045609">
    <property type="term" value="P:positive regulation of inner ear auditory receptor cell differentiation"/>
    <property type="evidence" value="ECO:0000314"/>
    <property type="project" value="MGI"/>
</dbReference>
<dbReference type="GO" id="GO:2000982">
    <property type="term" value="P:positive regulation of inner ear receptor cell differentiation"/>
    <property type="evidence" value="ECO:0000315"/>
    <property type="project" value="UniProtKB"/>
</dbReference>
<dbReference type="GO" id="GO:0045666">
    <property type="term" value="P:positive regulation of neuron differentiation"/>
    <property type="evidence" value="ECO:0000314"/>
    <property type="project" value="UniProtKB"/>
</dbReference>
<dbReference type="GO" id="GO:0045944">
    <property type="term" value="P:positive regulation of transcription by RNA polymerase II"/>
    <property type="evidence" value="ECO:0000314"/>
    <property type="project" value="NTNU_SB"/>
</dbReference>
<dbReference type="GO" id="GO:0045664">
    <property type="term" value="P:regulation of neuron differentiation"/>
    <property type="evidence" value="ECO:0000314"/>
    <property type="project" value="MGI"/>
</dbReference>
<dbReference type="GO" id="GO:0006366">
    <property type="term" value="P:transcription by RNA polymerase II"/>
    <property type="evidence" value="ECO:0000315"/>
    <property type="project" value="MGI"/>
</dbReference>
<dbReference type="CDD" id="cd19713">
    <property type="entry name" value="bHLH_TS_ATOH1"/>
    <property type="match status" value="1"/>
</dbReference>
<dbReference type="FunFam" id="4.10.280.10:FF:000025">
    <property type="entry name" value="protein atonal homolog 7"/>
    <property type="match status" value="1"/>
</dbReference>
<dbReference type="Gene3D" id="4.10.280.10">
    <property type="entry name" value="Helix-loop-helix DNA-binding domain"/>
    <property type="match status" value="1"/>
</dbReference>
<dbReference type="InterPro" id="IPR032661">
    <property type="entry name" value="ATOH1_bHLH"/>
</dbReference>
<dbReference type="InterPro" id="IPR011598">
    <property type="entry name" value="bHLH_dom"/>
</dbReference>
<dbReference type="InterPro" id="IPR050359">
    <property type="entry name" value="bHLH_transcription_factors"/>
</dbReference>
<dbReference type="InterPro" id="IPR036638">
    <property type="entry name" value="HLH_DNA-bd_sf"/>
</dbReference>
<dbReference type="PANTHER" id="PTHR19290">
    <property type="entry name" value="BASIC HELIX-LOOP-HELIX PROTEIN NEUROGENIN-RELATED"/>
    <property type="match status" value="1"/>
</dbReference>
<dbReference type="PANTHER" id="PTHR19290:SF82">
    <property type="entry name" value="TRANSCRIPTION FACTOR ATOH1"/>
    <property type="match status" value="1"/>
</dbReference>
<dbReference type="Pfam" id="PF00010">
    <property type="entry name" value="HLH"/>
    <property type="match status" value="1"/>
</dbReference>
<dbReference type="SMART" id="SM00353">
    <property type="entry name" value="HLH"/>
    <property type="match status" value="1"/>
</dbReference>
<dbReference type="SUPFAM" id="SSF47459">
    <property type="entry name" value="HLH, helix-loop-helix DNA-binding domain"/>
    <property type="match status" value="1"/>
</dbReference>
<dbReference type="PROSITE" id="PS50888">
    <property type="entry name" value="BHLH"/>
    <property type="match status" value="1"/>
</dbReference>
<protein>
    <recommendedName>
        <fullName evidence="7">Transcription factor Atoh1</fullName>
    </recommendedName>
    <alternativeName>
        <fullName evidence="8">Atonal bHLH transcription factor 1</fullName>
    </alternativeName>
    <alternativeName>
        <fullName evidence="6">Helix-loop-helix protein mATH-1</fullName>
        <shortName evidence="6">mATH1</shortName>
    </alternativeName>
    <alternativeName>
        <fullName evidence="8">Protein atonal homolog 1</fullName>
    </alternativeName>
</protein>
<sequence length="351" mass="37854">MSRLLHAEEWAEVKELGDHHRHPQPHHVPPLTPQPPATLQARDLPVYPAELSLLDSTDPRAWLTPTLQGLCTARAAQYLLHSPELGASEAAAPRDEADSQGELVRRSGCGGLSKSPGPVKVREQLCKLKGGVVVDELGCSRQRAPSSKQVNGVQKQRRLAANARERRRMHGLNHAFDQLRNVIPSFNNDKKLSKYETLQMAQIYINALSELLQTPNVGEQPPPPTASCKNDHHHLRTASSYEGGAGASAVAGAQPAPGGGPRPTPPGPCRTRFSGPASSGGYSVQLDALHFPAFEDRALTAMMAQKDLSPSLPGGILQPVQEDNSKTSPRSHRSDGEFSPHSHYSDSDEAS</sequence>
<organism>
    <name type="scientific">Mus musculus</name>
    <name type="common">Mouse</name>
    <dbReference type="NCBI Taxonomy" id="10090"/>
    <lineage>
        <taxon>Eukaryota</taxon>
        <taxon>Metazoa</taxon>
        <taxon>Chordata</taxon>
        <taxon>Craniata</taxon>
        <taxon>Vertebrata</taxon>
        <taxon>Euteleostomi</taxon>
        <taxon>Mammalia</taxon>
        <taxon>Eutheria</taxon>
        <taxon>Euarchontoglires</taxon>
        <taxon>Glires</taxon>
        <taxon>Rodentia</taxon>
        <taxon>Myomorpha</taxon>
        <taxon>Muroidea</taxon>
        <taxon>Muridae</taxon>
        <taxon>Murinae</taxon>
        <taxon>Mus</taxon>
        <taxon>Mus</taxon>
    </lineage>
</organism>
<name>ATOH1_MOUSE</name>
<keyword id="KW-0010">Activator</keyword>
<keyword id="KW-0217">Developmental protein</keyword>
<keyword id="KW-0221">Differentiation</keyword>
<keyword id="KW-0238">DNA-binding</keyword>
<keyword id="KW-0524">Neurogenesis</keyword>
<keyword id="KW-0539">Nucleus</keyword>
<keyword id="KW-1185">Reference proteome</keyword>
<keyword id="KW-0804">Transcription</keyword>
<keyword id="KW-0805">Transcription regulation</keyword>
<comment type="function">
    <text evidence="3">Transcriptional regulator. Activates E box-dependent transcription in collaboration with TCF3/E47, but the activity is completely antagonized by the negative regulator of neurogenesis HES1. Plays a role in the differentiation of subsets of neural cells by activating E box-dependent transcription.</text>
</comment>
<comment type="subunit">
    <text>Efficient DNA binding requires dimerization with another bHLH protein.</text>
</comment>
<comment type="interaction">
    <interactant intactId="EBI-15659000">
        <id>P48985</id>
    </interactant>
    <interactant intactId="EBI-15658970">
        <id>Q91YV0</id>
        <label>Tcf4</label>
    </interactant>
    <organismsDiffer>false</organismsDiffer>
    <experiments>2</experiments>
</comment>
<comment type="subcellular location">
    <subcellularLocation>
        <location evidence="1 3">Nucleus</location>
    </subcellularLocation>
</comment>
<comment type="tissue specificity">
    <text evidence="5">Developing nervous system, and in adult epithelial cells of the gastrointestinal tract.</text>
</comment>
<comment type="developmental stage">
    <text evidence="4 5">First detected in the cranial ganglions and the dorsal part of the central nervous system on 9.5 dpc (PubMed:7721778). From 10.5 dpc onward, prominently expressed in the dorsal part of the central nervous system but becomes restricted to the external granular layer of the cerebellum by 18 dpc and is undetectable in the adult nervous system (PubMed:7721778). Expressed in the cochlear nucleus at 15.5 dpc (PubMed:17977745).</text>
</comment>
<proteinExistence type="evidence at protein level"/>
<gene>
    <name evidence="8" type="primary">Atoh1</name>
    <name type="synonym">Ath1</name>
</gene>
<reference key="1">
    <citation type="journal article" date="1995" name="J. Biol. Chem.">
        <title>A mammalian helix-loop-helix factor structurally related to the product of Drosophila proneural gene atonal is a positive transcriptional regulator expressed in the developing nervous system.</title>
        <authorList>
            <person name="Akazawa C."/>
            <person name="Ishibashi M."/>
            <person name="Shimizu C."/>
            <person name="Nakanishi S."/>
            <person name="Kageyama R."/>
        </authorList>
    </citation>
    <scope>NUCLEOTIDE SEQUENCE [GENOMIC DNA]</scope>
    <scope>TISSUE SPECIFICITY</scope>
    <scope>DEVELOPMENTAL STAGE</scope>
    <source>
        <strain>129/J</strain>
    </source>
</reference>
<reference key="2">
    <citation type="journal article" date="2004" name="Genome Res.">
        <title>The status, quality, and expansion of the NIH full-length cDNA project: the Mammalian Gene Collection (MGC).</title>
        <authorList>
            <consortium name="The MGC Project Team"/>
        </authorList>
    </citation>
    <scope>NUCLEOTIDE SEQUENCE [LARGE SCALE MRNA]</scope>
    <source>
        <strain>FVB/N</strain>
        <tissue>Colon</tissue>
    </source>
</reference>
<reference key="3">
    <citation type="journal article" date="2000" name="Development">
        <title>Generation of neurons by transient expression of neural bHLH proteins in mammalian cells.</title>
        <authorList>
            <person name="Farah M.H."/>
            <person name="Olson J.M."/>
            <person name="Sucic H.B."/>
            <person name="Hume R.I."/>
            <person name="Tapscott S.J."/>
            <person name="Turner D.L."/>
        </authorList>
    </citation>
    <scope>FUNCTION</scope>
    <scope>SUBCELLULAR LOCATION</scope>
</reference>
<reference key="4">
    <citation type="journal article" date="2008" name="Mol. Cell. Neurosci.">
        <title>Math5 expression and function in the central auditory system.</title>
        <authorList>
            <person name="Saul S.M."/>
            <person name="Brzezinski J.A. IV"/>
            <person name="Altschuler R.A."/>
            <person name="Shore S.E."/>
            <person name="Rudolph D.D."/>
            <person name="Kabara L.L."/>
            <person name="Halsey K.E."/>
            <person name="Hufnagel R.B."/>
            <person name="Zhou J."/>
            <person name="Dolan D.F."/>
            <person name="Glaser T."/>
        </authorList>
    </citation>
    <scope>DEVELOPMENTAL STAGE</scope>
</reference>
<feature type="chain" id="PRO_0000127140" description="Transcription factor Atoh1">
    <location>
        <begin position="1"/>
        <end position="351"/>
    </location>
</feature>
<feature type="domain" description="bHLH" evidence="1">
    <location>
        <begin position="156"/>
        <end position="208"/>
    </location>
</feature>
<feature type="region of interest" description="Disordered" evidence="2">
    <location>
        <begin position="16"/>
        <end position="39"/>
    </location>
</feature>
<feature type="region of interest" description="Disordered" evidence="2">
    <location>
        <begin position="89"/>
        <end position="116"/>
    </location>
</feature>
<feature type="region of interest" description="Disordered" evidence="2">
    <location>
        <begin position="244"/>
        <end position="278"/>
    </location>
</feature>
<feature type="region of interest" description="Disordered" evidence="2">
    <location>
        <begin position="308"/>
        <end position="351"/>
    </location>
</feature>
<feature type="compositionally biased region" description="Pro residues" evidence="2">
    <location>
        <begin position="26"/>
        <end position="36"/>
    </location>
</feature>
<feature type="compositionally biased region" description="Low complexity" evidence="2">
    <location>
        <begin position="247"/>
        <end position="256"/>
    </location>
</feature>
<feature type="compositionally biased region" description="Pro residues" evidence="2">
    <location>
        <begin position="258"/>
        <end position="268"/>
    </location>
</feature>
<feature type="compositionally biased region" description="Basic and acidic residues" evidence="2">
    <location>
        <begin position="332"/>
        <end position="351"/>
    </location>
</feature>